<feature type="signal peptide" evidence="1">
    <location>
        <begin position="1"/>
        <end position="21"/>
    </location>
</feature>
<feature type="chain" id="PRO_0000035422" description="Neurotoxin-like protein pMD18-NTL3">
    <location>
        <begin position="22"/>
        <end position="86"/>
    </location>
</feature>
<feature type="disulfide bond" evidence="2">
    <location>
        <begin position="24"/>
        <end position="45"/>
    </location>
</feature>
<feature type="disulfide bond" evidence="2">
    <location>
        <begin position="38"/>
        <end position="62"/>
    </location>
</feature>
<feature type="disulfide bond" evidence="2">
    <location>
        <begin position="66"/>
        <end position="78"/>
    </location>
</feature>
<feature type="disulfide bond" evidence="2">
    <location>
        <begin position="79"/>
        <end position="84"/>
    </location>
</feature>
<evidence type="ECO:0000250" key="1"/>
<evidence type="ECO:0000250" key="2">
    <source>
        <dbReference type="UniProtKB" id="P60301"/>
    </source>
</evidence>
<evidence type="ECO:0000305" key="3"/>
<reference key="1">
    <citation type="journal article" date="2003" name="Yi Chuan">
        <title>Cloning and characterization of cDNAs of cardiotoxin-like protein in Bungarus multicinctus venom gland.</title>
        <authorList>
            <person name="Wang F."/>
            <person name="Wang Y.Q."/>
            <person name="Tong Z.Z."/>
        </authorList>
    </citation>
    <scope>NUCLEOTIDE SEQUENCE [MRNA]</scope>
    <source>
        <tissue>Venom gland</tissue>
    </source>
</reference>
<organism>
    <name type="scientific">Bungarus multicinctus</name>
    <name type="common">Many-banded krait</name>
    <dbReference type="NCBI Taxonomy" id="8616"/>
    <lineage>
        <taxon>Eukaryota</taxon>
        <taxon>Metazoa</taxon>
        <taxon>Chordata</taxon>
        <taxon>Craniata</taxon>
        <taxon>Vertebrata</taxon>
        <taxon>Euteleostomi</taxon>
        <taxon>Lepidosauria</taxon>
        <taxon>Squamata</taxon>
        <taxon>Bifurcata</taxon>
        <taxon>Unidentata</taxon>
        <taxon>Episquamata</taxon>
        <taxon>Toxicofera</taxon>
        <taxon>Serpentes</taxon>
        <taxon>Colubroidea</taxon>
        <taxon>Elapidae</taxon>
        <taxon>Bungarinae</taxon>
        <taxon>Bungarus</taxon>
    </lineage>
</organism>
<comment type="subcellular location">
    <subcellularLocation>
        <location evidence="1">Secreted</location>
    </subcellularLocation>
</comment>
<comment type="tissue specificity">
    <text evidence="3">Expressed by the venom gland.</text>
</comment>
<comment type="similarity">
    <text evidence="3">Belongs to the three-finger toxin family. Short-chain subfamily. Orphan group IX sub-subfamily.</text>
</comment>
<dbReference type="EMBL" id="AF459449">
    <property type="protein sequence ID" value="AAO47841.1"/>
    <property type="molecule type" value="mRNA"/>
</dbReference>
<dbReference type="SMR" id="Q800Y3"/>
<dbReference type="GO" id="GO:0005576">
    <property type="term" value="C:extracellular region"/>
    <property type="evidence" value="ECO:0007669"/>
    <property type="project" value="UniProtKB-SubCell"/>
</dbReference>
<dbReference type="GO" id="GO:0090729">
    <property type="term" value="F:toxin activity"/>
    <property type="evidence" value="ECO:0007669"/>
    <property type="project" value="UniProtKB-KW"/>
</dbReference>
<dbReference type="CDD" id="cd00206">
    <property type="entry name" value="TFP_snake_toxin"/>
    <property type="match status" value="1"/>
</dbReference>
<dbReference type="Gene3D" id="2.10.60.10">
    <property type="entry name" value="CD59"/>
    <property type="match status" value="1"/>
</dbReference>
<dbReference type="InterPro" id="IPR003571">
    <property type="entry name" value="Snake_3FTx"/>
</dbReference>
<dbReference type="InterPro" id="IPR045860">
    <property type="entry name" value="Snake_toxin-like_sf"/>
</dbReference>
<dbReference type="InterPro" id="IPR018354">
    <property type="entry name" value="Snake_toxin_con_site"/>
</dbReference>
<dbReference type="InterPro" id="IPR054131">
    <property type="entry name" value="Toxin_cobra-type"/>
</dbReference>
<dbReference type="Pfam" id="PF21947">
    <property type="entry name" value="Toxin_cobra-type"/>
    <property type="match status" value="1"/>
</dbReference>
<dbReference type="SUPFAM" id="SSF57302">
    <property type="entry name" value="Snake toxin-like"/>
    <property type="match status" value="1"/>
</dbReference>
<dbReference type="PROSITE" id="PS00272">
    <property type="entry name" value="SNAKE_TOXIN"/>
    <property type="match status" value="1"/>
</dbReference>
<accession>Q800Y3</accession>
<name>3SO93_BUNMU</name>
<protein>
    <recommendedName>
        <fullName>Neurotoxin-like protein pMD18-NTL3</fullName>
    </recommendedName>
</protein>
<proteinExistence type="inferred from homology"/>
<keyword id="KW-1015">Disulfide bond</keyword>
<keyword id="KW-0964">Secreted</keyword>
<keyword id="KW-0732">Signal</keyword>
<keyword id="KW-0800">Toxin</keyword>
<sequence length="86" mass="9758">MKTLLLTLVVLTIACLDLGYTKTCFNDDLTNPKTTELCRHSVYFCFKNSWIAGGVERIERGCSLTCPDIKYNGKYIYCCTRDNCNA</sequence>